<name>MCM2_YEAST</name>
<dbReference type="EC" id="3.6.4.12"/>
<dbReference type="EMBL" id="X77291">
    <property type="protein sequence ID" value="CAA54503.1"/>
    <property type="molecule type" value="Genomic_DNA"/>
</dbReference>
<dbReference type="EMBL" id="X53539">
    <property type="protein sequence ID" value="CAA37615.1"/>
    <property type="molecule type" value="Genomic_DNA"/>
</dbReference>
<dbReference type="EMBL" id="Z35784">
    <property type="protein sequence ID" value="CAA84842.1"/>
    <property type="molecule type" value="Genomic_DNA"/>
</dbReference>
<dbReference type="EMBL" id="X74544">
    <property type="protein sequence ID" value="CAA52635.1"/>
    <property type="molecule type" value="Genomic_DNA"/>
</dbReference>
<dbReference type="EMBL" id="BK006936">
    <property type="protein sequence ID" value="DAA07097.1"/>
    <property type="molecule type" value="Genomic_DNA"/>
</dbReference>
<dbReference type="PIR" id="S45757">
    <property type="entry name" value="S45757"/>
</dbReference>
<dbReference type="RefSeq" id="NP_009530.1">
    <property type="nucleotide sequence ID" value="NM_001178263.1"/>
</dbReference>
<dbReference type="PDB" id="3JA8">
    <property type="method" value="EM"/>
    <property type="resolution" value="3.80 A"/>
    <property type="chains" value="2=1-868"/>
</dbReference>
<dbReference type="PDB" id="3JC5">
    <property type="method" value="EM"/>
    <property type="resolution" value="4.70 A"/>
    <property type="chains" value="2=1-868"/>
</dbReference>
<dbReference type="PDB" id="3JC6">
    <property type="method" value="EM"/>
    <property type="resolution" value="3.70 A"/>
    <property type="chains" value="2=1-868"/>
</dbReference>
<dbReference type="PDB" id="3JC7">
    <property type="method" value="EM"/>
    <property type="resolution" value="4.80 A"/>
    <property type="chains" value="2=1-868"/>
</dbReference>
<dbReference type="PDB" id="5BK4">
    <property type="method" value="EM"/>
    <property type="resolution" value="3.90 A"/>
    <property type="chains" value="2/A=1-868"/>
</dbReference>
<dbReference type="PDB" id="5U8S">
    <property type="method" value="EM"/>
    <property type="resolution" value="6.10 A"/>
    <property type="chains" value="2=1-868"/>
</dbReference>
<dbReference type="PDB" id="5U8T">
    <property type="method" value="EM"/>
    <property type="resolution" value="4.90 A"/>
    <property type="chains" value="2=1-868"/>
</dbReference>
<dbReference type="PDB" id="5V8F">
    <property type="method" value="EM"/>
    <property type="resolution" value="3.90 A"/>
    <property type="chains" value="2=1-868"/>
</dbReference>
<dbReference type="PDB" id="5XF8">
    <property type="method" value="EM"/>
    <property type="resolution" value="7.10 A"/>
    <property type="chains" value="2=1-868"/>
</dbReference>
<dbReference type="PDB" id="6EYC">
    <property type="method" value="EM"/>
    <property type="resolution" value="3.80 A"/>
    <property type="chains" value="2=1-868"/>
</dbReference>
<dbReference type="PDB" id="6F0L">
    <property type="method" value="EM"/>
    <property type="resolution" value="4.77 A"/>
    <property type="chains" value="2/A=1-868"/>
</dbReference>
<dbReference type="PDB" id="6HV9">
    <property type="method" value="EM"/>
    <property type="resolution" value="4.98 A"/>
    <property type="chains" value="2=1-868"/>
</dbReference>
<dbReference type="PDB" id="6PTJ">
    <property type="method" value="EM"/>
    <property type="resolution" value="3.80 A"/>
    <property type="chains" value="2=1-868"/>
</dbReference>
<dbReference type="PDB" id="6PTN">
    <property type="method" value="EM"/>
    <property type="resolution" value="5.80 A"/>
    <property type="chains" value="2/i=1-868"/>
</dbReference>
<dbReference type="PDB" id="6PTO">
    <property type="method" value="EM"/>
    <property type="resolution" value="7.00 A"/>
    <property type="chains" value="2/F/h=1-868"/>
</dbReference>
<dbReference type="PDB" id="6RQC">
    <property type="method" value="EM"/>
    <property type="resolution" value="4.40 A"/>
    <property type="chains" value="2=1-868"/>
</dbReference>
<dbReference type="PDB" id="6SKL">
    <property type="method" value="EM"/>
    <property type="resolution" value="3.70 A"/>
    <property type="chains" value="2=1-868"/>
</dbReference>
<dbReference type="PDB" id="6SKO">
    <property type="method" value="EM"/>
    <property type="resolution" value="3.40 A"/>
    <property type="chains" value="2=1-868"/>
</dbReference>
<dbReference type="PDB" id="6U0M">
    <property type="method" value="EM"/>
    <property type="resolution" value="3.90 A"/>
    <property type="chains" value="2=201-864"/>
</dbReference>
<dbReference type="PDB" id="6WGF">
    <property type="method" value="EM"/>
    <property type="resolution" value="7.70 A"/>
    <property type="chains" value="2=1-868"/>
</dbReference>
<dbReference type="PDB" id="6WGG">
    <property type="method" value="EM"/>
    <property type="resolution" value="8.10 A"/>
    <property type="chains" value="2=1-868"/>
</dbReference>
<dbReference type="PDB" id="6WGI">
    <property type="method" value="EM"/>
    <property type="resolution" value="10.00 A"/>
    <property type="chains" value="2=1-868"/>
</dbReference>
<dbReference type="PDB" id="7P30">
    <property type="method" value="EM"/>
    <property type="resolution" value="3.00 A"/>
    <property type="chains" value="2/A=1-868"/>
</dbReference>
<dbReference type="PDB" id="7P5Z">
    <property type="method" value="EM"/>
    <property type="resolution" value="3.30 A"/>
    <property type="chains" value="2/A=1-868"/>
</dbReference>
<dbReference type="PDB" id="7PMK">
    <property type="method" value="EM"/>
    <property type="resolution" value="3.20 A"/>
    <property type="chains" value="2=1-868"/>
</dbReference>
<dbReference type="PDB" id="7PMN">
    <property type="method" value="EM"/>
    <property type="resolution" value="3.20 A"/>
    <property type="chains" value="2=1-868"/>
</dbReference>
<dbReference type="PDB" id="7PT6">
    <property type="method" value="EM"/>
    <property type="resolution" value="3.20 A"/>
    <property type="chains" value="2/B=1-868"/>
</dbReference>
<dbReference type="PDB" id="7PT7">
    <property type="method" value="EM"/>
    <property type="resolution" value="3.80 A"/>
    <property type="chains" value="2/B=1-868"/>
</dbReference>
<dbReference type="PDB" id="7V3U">
    <property type="method" value="EM"/>
    <property type="resolution" value="3.20 A"/>
    <property type="chains" value="2/B=1-868"/>
</dbReference>
<dbReference type="PDB" id="7V3V">
    <property type="method" value="EM"/>
    <property type="resolution" value="2.90 A"/>
    <property type="chains" value="2/B=1-868"/>
</dbReference>
<dbReference type="PDB" id="7W8G">
    <property type="method" value="EM"/>
    <property type="resolution" value="2.52 A"/>
    <property type="chains" value="2/B=1-868"/>
</dbReference>
<dbReference type="PDB" id="8B9A">
    <property type="method" value="EM"/>
    <property type="resolution" value="3.50 A"/>
    <property type="chains" value="2=1-868"/>
</dbReference>
<dbReference type="PDB" id="8B9B">
    <property type="method" value="EM"/>
    <property type="resolution" value="3.50 A"/>
    <property type="chains" value="2=1-868"/>
</dbReference>
<dbReference type="PDB" id="8B9C">
    <property type="method" value="EM"/>
    <property type="resolution" value="4.60 A"/>
    <property type="chains" value="2=1-868"/>
</dbReference>
<dbReference type="PDB" id="8KG6">
    <property type="method" value="EM"/>
    <property type="resolution" value="3.07 A"/>
    <property type="chains" value="2=1-868"/>
</dbReference>
<dbReference type="PDB" id="8KG8">
    <property type="method" value="EM"/>
    <property type="resolution" value="4.23 A"/>
    <property type="chains" value="2=1-868"/>
</dbReference>
<dbReference type="PDB" id="8KG9">
    <property type="method" value="EM"/>
    <property type="resolution" value="4.52 A"/>
    <property type="chains" value="2=1-868"/>
</dbReference>
<dbReference type="PDB" id="8P5E">
    <property type="method" value="EM"/>
    <property type="resolution" value="3.90 A"/>
    <property type="chains" value="2=1-868"/>
</dbReference>
<dbReference type="PDB" id="8P62">
    <property type="method" value="EM"/>
    <property type="resolution" value="3.90 A"/>
    <property type="chains" value="2=1-868"/>
</dbReference>
<dbReference type="PDB" id="8P63">
    <property type="method" value="EM"/>
    <property type="resolution" value="3.70 A"/>
    <property type="chains" value="2=1-868"/>
</dbReference>
<dbReference type="PDB" id="8RIF">
    <property type="method" value="EM"/>
    <property type="resolution" value="2.79 A"/>
    <property type="chains" value="2/A=1-868"/>
</dbReference>
<dbReference type="PDB" id="8RIG">
    <property type="method" value="EM"/>
    <property type="resolution" value="3.41 A"/>
    <property type="chains" value="2=1-868"/>
</dbReference>
<dbReference type="PDB" id="8W7M">
    <property type="method" value="EM"/>
    <property type="resolution" value="4.12 A"/>
    <property type="chains" value="2=1-868"/>
</dbReference>
<dbReference type="PDB" id="8XGC">
    <property type="method" value="EM"/>
    <property type="resolution" value="3.70 A"/>
    <property type="chains" value="2=1-868"/>
</dbReference>
<dbReference type="PDB" id="9BCX">
    <property type="method" value="EM"/>
    <property type="resolution" value="6.10 A"/>
    <property type="chains" value="2=1-868"/>
</dbReference>
<dbReference type="PDB" id="9GJP">
    <property type="method" value="EM"/>
    <property type="resolution" value="3.40 A"/>
    <property type="chains" value="2=1-868"/>
</dbReference>
<dbReference type="PDB" id="9GJW">
    <property type="method" value="EM"/>
    <property type="resolution" value="3.30 A"/>
    <property type="chains" value="2=1-868"/>
</dbReference>
<dbReference type="PDB" id="9GM5">
    <property type="method" value="EM"/>
    <property type="resolution" value="3.70 A"/>
    <property type="chains" value="2=1-868"/>
</dbReference>
<dbReference type="PDBsum" id="3JA8"/>
<dbReference type="PDBsum" id="3JC5"/>
<dbReference type="PDBsum" id="3JC6"/>
<dbReference type="PDBsum" id="3JC7"/>
<dbReference type="PDBsum" id="5BK4"/>
<dbReference type="PDBsum" id="5U8S"/>
<dbReference type="PDBsum" id="5U8T"/>
<dbReference type="PDBsum" id="5V8F"/>
<dbReference type="PDBsum" id="5XF8"/>
<dbReference type="PDBsum" id="6EYC"/>
<dbReference type="PDBsum" id="6F0L"/>
<dbReference type="PDBsum" id="6HV9"/>
<dbReference type="PDBsum" id="6PTJ"/>
<dbReference type="PDBsum" id="6PTN"/>
<dbReference type="PDBsum" id="6PTO"/>
<dbReference type="PDBsum" id="6RQC"/>
<dbReference type="PDBsum" id="6SKL"/>
<dbReference type="PDBsum" id="6SKO"/>
<dbReference type="PDBsum" id="6U0M"/>
<dbReference type="PDBsum" id="6WGF"/>
<dbReference type="PDBsum" id="6WGG"/>
<dbReference type="PDBsum" id="6WGI"/>
<dbReference type="PDBsum" id="7P30"/>
<dbReference type="PDBsum" id="7P5Z"/>
<dbReference type="PDBsum" id="7PMK"/>
<dbReference type="PDBsum" id="7PMN"/>
<dbReference type="PDBsum" id="7PT6"/>
<dbReference type="PDBsum" id="7PT7"/>
<dbReference type="PDBsum" id="7V3U"/>
<dbReference type="PDBsum" id="7V3V"/>
<dbReference type="PDBsum" id="7W8G"/>
<dbReference type="PDBsum" id="8B9A"/>
<dbReference type="PDBsum" id="8B9B"/>
<dbReference type="PDBsum" id="8B9C"/>
<dbReference type="PDBsum" id="8KG6"/>
<dbReference type="PDBsum" id="8KG8"/>
<dbReference type="PDBsum" id="8KG9"/>
<dbReference type="PDBsum" id="8P5E"/>
<dbReference type="PDBsum" id="8P62"/>
<dbReference type="PDBsum" id="8P63"/>
<dbReference type="PDBsum" id="8RIF"/>
<dbReference type="PDBsum" id="8RIG"/>
<dbReference type="PDBsum" id="8W7M"/>
<dbReference type="PDBsum" id="8XGC"/>
<dbReference type="PDBsum" id="9BCX"/>
<dbReference type="PDBsum" id="9GJP"/>
<dbReference type="PDBsum" id="9GJW"/>
<dbReference type="PDBsum" id="9GM5"/>
<dbReference type="EMDB" id="EMD-0288"/>
<dbReference type="EMDB" id="EMD-10227"/>
<dbReference type="EMDB" id="EMD-10230"/>
<dbReference type="EMDB" id="EMD-13176"/>
<dbReference type="EMDB" id="EMD-13211"/>
<dbReference type="EMDB" id="EMD-13539"/>
<dbReference type="EMDB" id="EMD-13619"/>
<dbReference type="EMDB" id="EMD-13620"/>
<dbReference type="EMDB" id="EMD-13624"/>
<dbReference type="EMDB" id="EMD-13629"/>
<dbReference type="EMDB" id="EMD-13640"/>
<dbReference type="EMDB" id="EMD-13644"/>
<dbReference type="EMDB" id="EMD-13647"/>
<dbReference type="EMDB" id="EMD-13648"/>
<dbReference type="EMDB" id="EMD-13656"/>
<dbReference type="EMDB" id="EMD-15924"/>
<dbReference type="EMDB" id="EMD-17449"/>
<dbReference type="EMDB" id="EMD-17458"/>
<dbReference type="EMDB" id="EMD-17459"/>
<dbReference type="EMDB" id="EMD-19186"/>
<dbReference type="EMDB" id="EMD-19187"/>
<dbReference type="EMDB" id="EMD-20471"/>
<dbReference type="EMDB" id="EMD-20472"/>
<dbReference type="EMDB" id="EMD-20473"/>
<dbReference type="EMDB" id="EMD-20607"/>
<dbReference type="EMDB" id="EMD-21664"/>
<dbReference type="EMDB" id="EMD-21665"/>
<dbReference type="EMDB" id="EMD-21666"/>
<dbReference type="EMDB" id="EMD-31684"/>
<dbReference type="EMDB" id="EMD-31685"/>
<dbReference type="EMDB" id="EMD-32355"/>
<dbReference type="EMDB" id="EMD-37211"/>
<dbReference type="EMDB" id="EMD-37213"/>
<dbReference type="EMDB" id="EMD-44441"/>
<dbReference type="EMDB" id="EMD-4980"/>
<dbReference type="EMDB" id="EMD-51401"/>
<dbReference type="EMDB" id="EMD-51407"/>
<dbReference type="EMDB" id="EMD-51441"/>
<dbReference type="EMDB" id="EMD-6671"/>
<dbReference type="EMDB" id="EMD-8518"/>
<dbReference type="EMDB" id="EMD-8519"/>
<dbReference type="EMDB" id="EMD-8540"/>
<dbReference type="EMDB" id="EMD-9400"/>
<dbReference type="SMR" id="P29469"/>
<dbReference type="BioGRID" id="32675">
    <property type="interactions" value="262"/>
</dbReference>
<dbReference type="ComplexPortal" id="CPX-2944">
    <property type="entry name" value="MCM complex"/>
</dbReference>
<dbReference type="DIP" id="DIP-2291N"/>
<dbReference type="FunCoup" id="P29469">
    <property type="interactions" value="1304"/>
</dbReference>
<dbReference type="IntAct" id="P29469">
    <property type="interactions" value="101"/>
</dbReference>
<dbReference type="MINT" id="P29469"/>
<dbReference type="STRING" id="4932.YBL023C"/>
<dbReference type="iPTMnet" id="P29469"/>
<dbReference type="PaxDb" id="4932-YBL023C"/>
<dbReference type="PeptideAtlas" id="P29469"/>
<dbReference type="EnsemblFungi" id="YBL023C_mRNA">
    <property type="protein sequence ID" value="YBL023C"/>
    <property type="gene ID" value="YBL023C"/>
</dbReference>
<dbReference type="GeneID" id="852258"/>
<dbReference type="KEGG" id="sce:YBL023C"/>
<dbReference type="AGR" id="SGD:S000000119"/>
<dbReference type="SGD" id="S000000119">
    <property type="gene designation" value="MCM2"/>
</dbReference>
<dbReference type="VEuPathDB" id="FungiDB:YBL023C"/>
<dbReference type="eggNOG" id="KOG0477">
    <property type="taxonomic scope" value="Eukaryota"/>
</dbReference>
<dbReference type="GeneTree" id="ENSGT01050000244824"/>
<dbReference type="HOGENOM" id="CLU_000995_0_0_1"/>
<dbReference type="InParanoid" id="P29469"/>
<dbReference type="OMA" id="TYERVTT"/>
<dbReference type="OrthoDB" id="844at2759"/>
<dbReference type="BioCyc" id="YEAST:G3O-28926-MONOMER"/>
<dbReference type="Reactome" id="R-SCE-176187">
    <property type="pathway name" value="Activation of ATR in response to replication stress"/>
</dbReference>
<dbReference type="Reactome" id="R-SCE-68867">
    <property type="pathway name" value="Assembly of the pre-replicative complex"/>
</dbReference>
<dbReference type="Reactome" id="R-SCE-68962">
    <property type="pathway name" value="Activation of the pre-replicative complex"/>
</dbReference>
<dbReference type="Reactome" id="R-SCE-69052">
    <property type="pathway name" value="Switching of origins to a post-replicative state"/>
</dbReference>
<dbReference type="BioGRID-ORCS" id="852258">
    <property type="hits" value="0 hits in 10 CRISPR screens"/>
</dbReference>
<dbReference type="CD-CODE" id="E03F929F">
    <property type="entry name" value="Stress granule"/>
</dbReference>
<dbReference type="EvolutionaryTrace" id="P29469"/>
<dbReference type="PRO" id="PR:P29469"/>
<dbReference type="Proteomes" id="UP000002311">
    <property type="component" value="Chromosome II"/>
</dbReference>
<dbReference type="RNAct" id="P29469">
    <property type="molecule type" value="protein"/>
</dbReference>
<dbReference type="GO" id="GO:0071162">
    <property type="term" value="C:CMG complex"/>
    <property type="evidence" value="ECO:0000314"/>
    <property type="project" value="SGD"/>
</dbReference>
<dbReference type="GO" id="GO:0005737">
    <property type="term" value="C:cytoplasm"/>
    <property type="evidence" value="ECO:0000314"/>
    <property type="project" value="SGD"/>
</dbReference>
<dbReference type="GO" id="GO:0031261">
    <property type="term" value="C:DNA replication preinitiation complex"/>
    <property type="evidence" value="ECO:0000314"/>
    <property type="project" value="SGD"/>
</dbReference>
<dbReference type="GO" id="GO:0042555">
    <property type="term" value="C:MCM complex"/>
    <property type="evidence" value="ECO:0000314"/>
    <property type="project" value="SGD"/>
</dbReference>
<dbReference type="GO" id="GO:0005656">
    <property type="term" value="C:nuclear pre-replicative complex"/>
    <property type="evidence" value="ECO:0000314"/>
    <property type="project" value="SGD"/>
</dbReference>
<dbReference type="GO" id="GO:0043596">
    <property type="term" value="C:nuclear replication fork"/>
    <property type="evidence" value="ECO:0000314"/>
    <property type="project" value="ComplexPortal"/>
</dbReference>
<dbReference type="GO" id="GO:0005654">
    <property type="term" value="C:nucleoplasm"/>
    <property type="evidence" value="ECO:0000304"/>
    <property type="project" value="Reactome"/>
</dbReference>
<dbReference type="GO" id="GO:0005634">
    <property type="term" value="C:nucleus"/>
    <property type="evidence" value="ECO:0000314"/>
    <property type="project" value="SGD"/>
</dbReference>
<dbReference type="GO" id="GO:0031298">
    <property type="term" value="C:replication fork protection complex"/>
    <property type="evidence" value="ECO:0007669"/>
    <property type="project" value="UniProtKB-ARBA"/>
</dbReference>
<dbReference type="GO" id="GO:0005524">
    <property type="term" value="F:ATP binding"/>
    <property type="evidence" value="ECO:0007669"/>
    <property type="project" value="UniProtKB-KW"/>
</dbReference>
<dbReference type="GO" id="GO:0016887">
    <property type="term" value="F:ATP hydrolysis activity"/>
    <property type="evidence" value="ECO:0007669"/>
    <property type="project" value="RHEA"/>
</dbReference>
<dbReference type="GO" id="GO:0003682">
    <property type="term" value="F:chromatin binding"/>
    <property type="evidence" value="ECO:0000314"/>
    <property type="project" value="SGD"/>
</dbReference>
<dbReference type="GO" id="GO:0003688">
    <property type="term" value="F:DNA replication origin binding"/>
    <property type="evidence" value="ECO:0000314"/>
    <property type="project" value="SGD"/>
</dbReference>
<dbReference type="GO" id="GO:0004386">
    <property type="term" value="F:helicase activity"/>
    <property type="evidence" value="ECO:0007669"/>
    <property type="project" value="UniProtKB-KW"/>
</dbReference>
<dbReference type="GO" id="GO:0008270">
    <property type="term" value="F:zinc ion binding"/>
    <property type="evidence" value="ECO:0007669"/>
    <property type="project" value="UniProtKB-KW"/>
</dbReference>
<dbReference type="GO" id="GO:0006974">
    <property type="term" value="P:DNA damage response"/>
    <property type="evidence" value="ECO:0000315"/>
    <property type="project" value="SGD"/>
</dbReference>
<dbReference type="GO" id="GO:0006260">
    <property type="term" value="P:DNA replication"/>
    <property type="evidence" value="ECO:0000318"/>
    <property type="project" value="GO_Central"/>
</dbReference>
<dbReference type="GO" id="GO:0006271">
    <property type="term" value="P:DNA strand elongation involved in DNA replication"/>
    <property type="evidence" value="ECO:0000315"/>
    <property type="project" value="SGD"/>
</dbReference>
<dbReference type="GO" id="GO:0000727">
    <property type="term" value="P:double-strand break repair via break-induced replication"/>
    <property type="evidence" value="ECO:0000315"/>
    <property type="project" value="SGD"/>
</dbReference>
<dbReference type="GO" id="GO:1902975">
    <property type="term" value="P:mitotic DNA replication initiation"/>
    <property type="evidence" value="ECO:0000315"/>
    <property type="project" value="SGD"/>
</dbReference>
<dbReference type="GO" id="GO:0006267">
    <property type="term" value="P:pre-replicative complex assembly involved in nuclear cell cycle DNA replication"/>
    <property type="evidence" value="ECO:0000314"/>
    <property type="project" value="SGD"/>
</dbReference>
<dbReference type="GO" id="GO:0006279">
    <property type="term" value="P:premeiotic DNA replication"/>
    <property type="evidence" value="ECO:0000314"/>
    <property type="project" value="ComplexPortal"/>
</dbReference>
<dbReference type="CDD" id="cd17753">
    <property type="entry name" value="MCM2"/>
    <property type="match status" value="1"/>
</dbReference>
<dbReference type="FunFam" id="2.20.28.10:FF:000002">
    <property type="entry name" value="DNA helicase"/>
    <property type="match status" value="1"/>
</dbReference>
<dbReference type="FunFam" id="3.30.1640.10:FF:000003">
    <property type="entry name" value="DNA helicase"/>
    <property type="match status" value="1"/>
</dbReference>
<dbReference type="Gene3D" id="2.20.28.10">
    <property type="match status" value="1"/>
</dbReference>
<dbReference type="Gene3D" id="3.30.1640.10">
    <property type="entry name" value="mini-chromosome maintenance (MCM) complex, chain A, domain 1"/>
    <property type="match status" value="1"/>
</dbReference>
<dbReference type="Gene3D" id="2.40.50.140">
    <property type="entry name" value="Nucleic acid-binding proteins"/>
    <property type="match status" value="1"/>
</dbReference>
<dbReference type="Gene3D" id="3.40.50.300">
    <property type="entry name" value="P-loop containing nucleotide triphosphate hydrolases"/>
    <property type="match status" value="1"/>
</dbReference>
<dbReference type="InterPro" id="IPR031327">
    <property type="entry name" value="MCM"/>
</dbReference>
<dbReference type="InterPro" id="IPR008045">
    <property type="entry name" value="MCM2"/>
</dbReference>
<dbReference type="InterPro" id="IPR018525">
    <property type="entry name" value="MCM_CS"/>
</dbReference>
<dbReference type="InterPro" id="IPR001208">
    <property type="entry name" value="MCM_dom"/>
</dbReference>
<dbReference type="InterPro" id="IPR041562">
    <property type="entry name" value="MCM_lid"/>
</dbReference>
<dbReference type="InterPro" id="IPR027925">
    <property type="entry name" value="MCM_N"/>
</dbReference>
<dbReference type="InterPro" id="IPR033762">
    <property type="entry name" value="MCM_OB"/>
</dbReference>
<dbReference type="InterPro" id="IPR012340">
    <property type="entry name" value="NA-bd_OB-fold"/>
</dbReference>
<dbReference type="InterPro" id="IPR027417">
    <property type="entry name" value="P-loop_NTPase"/>
</dbReference>
<dbReference type="PANTHER" id="PTHR11630">
    <property type="entry name" value="DNA REPLICATION LICENSING FACTOR MCM FAMILY MEMBER"/>
    <property type="match status" value="1"/>
</dbReference>
<dbReference type="PANTHER" id="PTHR11630:SF44">
    <property type="entry name" value="DNA REPLICATION LICENSING FACTOR MCM2"/>
    <property type="match status" value="1"/>
</dbReference>
<dbReference type="Pfam" id="PF00493">
    <property type="entry name" value="MCM"/>
    <property type="match status" value="1"/>
</dbReference>
<dbReference type="Pfam" id="PF12619">
    <property type="entry name" value="MCM2_N"/>
    <property type="match status" value="1"/>
</dbReference>
<dbReference type="Pfam" id="PF17855">
    <property type="entry name" value="MCM_lid"/>
    <property type="match status" value="1"/>
</dbReference>
<dbReference type="Pfam" id="PF14551">
    <property type="entry name" value="MCM_N"/>
    <property type="match status" value="1"/>
</dbReference>
<dbReference type="Pfam" id="PF17207">
    <property type="entry name" value="MCM_OB"/>
    <property type="match status" value="1"/>
</dbReference>
<dbReference type="PRINTS" id="PR01657">
    <property type="entry name" value="MCMFAMILY"/>
</dbReference>
<dbReference type="PRINTS" id="PR01658">
    <property type="entry name" value="MCMPROTEIN2"/>
</dbReference>
<dbReference type="SMART" id="SM00350">
    <property type="entry name" value="MCM"/>
    <property type="match status" value="1"/>
</dbReference>
<dbReference type="SUPFAM" id="SSF50249">
    <property type="entry name" value="Nucleic acid-binding proteins"/>
    <property type="match status" value="1"/>
</dbReference>
<dbReference type="SUPFAM" id="SSF52540">
    <property type="entry name" value="P-loop containing nucleoside triphosphate hydrolases"/>
    <property type="match status" value="1"/>
</dbReference>
<dbReference type="PROSITE" id="PS00847">
    <property type="entry name" value="MCM_1"/>
    <property type="match status" value="1"/>
</dbReference>
<dbReference type="PROSITE" id="PS50051">
    <property type="entry name" value="MCM_2"/>
    <property type="match status" value="1"/>
</dbReference>
<feature type="chain" id="PRO_0000194091" description="DNA replication licensing factor MCM2">
    <location>
        <begin position="1"/>
        <end position="868"/>
    </location>
</feature>
<feature type="domain" description="MCM">
    <location>
        <begin position="493"/>
        <end position="700"/>
    </location>
</feature>
<feature type="zinc finger region" description="C4-type" evidence="1">
    <location>
        <begin position="341"/>
        <end position="367"/>
    </location>
</feature>
<feature type="region of interest" description="Disordered" evidence="2">
    <location>
        <begin position="1"/>
        <end position="65"/>
    </location>
</feature>
<feature type="region of interest" description="Disordered" evidence="2">
    <location>
        <begin position="87"/>
        <end position="106"/>
    </location>
</feature>
<feature type="region of interest" description="Disordered" evidence="2">
    <location>
        <begin position="704"/>
        <end position="728"/>
    </location>
</feature>
<feature type="short sequence motif" description="Arginine finger">
    <location>
        <begin position="675"/>
        <end position="678"/>
    </location>
</feature>
<feature type="compositionally biased region" description="Acidic residues" evidence="2">
    <location>
        <begin position="49"/>
        <end position="65"/>
    </location>
</feature>
<feature type="binding site" evidence="1">
    <location>
        <begin position="543"/>
        <end position="550"/>
    </location>
    <ligand>
        <name>ATP</name>
        <dbReference type="ChEBI" id="CHEBI:30616"/>
    </ligand>
</feature>
<feature type="modified residue" description="Phosphoserine" evidence="9">
    <location>
        <position position="14"/>
    </location>
</feature>
<feature type="modified residue" description="Phosphoserine" evidence="9">
    <location>
        <position position="16"/>
    </location>
</feature>
<feature type="modified residue" description="Phosphoserine" evidence="9">
    <location>
        <position position="23"/>
    </location>
</feature>
<feature type="modified residue" description="Phosphoserine" evidence="9">
    <location>
        <position position="164"/>
    </location>
</feature>
<feature type="modified residue" description="Phosphoserine" evidence="9">
    <location>
        <position position="170"/>
    </location>
</feature>
<feature type="sequence variant" description="In allele MCM2-1.">
    <original>E</original>
    <variation>K</variation>
    <location>
        <position position="392"/>
    </location>
</feature>
<feature type="mutagenesis site" description="Loss of activity." evidence="7">
    <original>C</original>
    <variation>Y</variation>
    <variation>F</variation>
    <variation>S</variation>
    <variation>H</variation>
    <location>
        <position position="364"/>
    </location>
</feature>
<feature type="mutagenesis site" description="Loss of activity." evidence="7">
    <original>C</original>
    <variation>Y</variation>
    <variation>F</variation>
    <variation>S</variation>
    <variation>H</variation>
    <location>
        <position position="367"/>
    </location>
</feature>
<feature type="mutagenesis site" description="Reduces MCM2-7 complex helicase activity. Abolishes MCM2-7 complex helicase activity; when associated with MCM5 A-422. Reduces MCM2-7 complex helicase activity; when associated with MCM3 A-415." evidence="4">
    <original>K</original>
    <variation>A</variation>
    <location>
        <position position="549"/>
    </location>
</feature>
<feature type="mutagenesis site" description="Loss of MCM2-7 complex helicase activity." evidence="4">
    <original>R</original>
    <variation>A</variation>
    <location>
        <position position="676"/>
    </location>
</feature>
<feature type="sequence conflict" description="In Ref. 1; CAA37615." evidence="8" ref="1">
    <original>S</original>
    <variation>T</variation>
    <location>
        <position position="164"/>
    </location>
</feature>
<feature type="sequence conflict" description="In Ref. 1; CAA37615." evidence="8" ref="1">
    <original>MD</original>
    <variation>IH</variation>
    <location>
        <begin position="172"/>
        <end position="173"/>
    </location>
</feature>
<feature type="sequence conflict" description="In Ref. 1; CAA37615." evidence="8" ref="1">
    <original>G</original>
    <variation>P</variation>
    <location>
        <position position="529"/>
    </location>
</feature>
<feature type="sequence conflict" description="In Ref. 1; CAA37615." evidence="8" ref="1">
    <original>A</original>
    <variation>R</variation>
    <location>
        <position position="578"/>
    </location>
</feature>
<feature type="sequence conflict" description="In Ref. 1; CAA37615." evidence="8" ref="1">
    <original>D</original>
    <variation>H</variation>
    <location>
        <position position="583"/>
    </location>
</feature>
<feature type="sequence conflict" description="In Ref. 1; CAA37615." evidence="8" ref="1">
    <original>E</original>
    <variation>Q</variation>
    <location>
        <position position="712"/>
    </location>
</feature>
<feature type="sequence conflict" description="In Ref. 1; CAA37615." evidence="8" ref="1">
    <location>
        <begin position="733"/>
        <end position="747"/>
    </location>
</feature>
<feature type="sequence conflict" description="In Ref. 1; CAA37615." evidence="8" ref="1">
    <original>RSFAIYTLGH</original>
    <variation>SLSQFIPWVTKTLLFLRISGYEDKKFSVSIHVLAILFSIYKFPLFFV</variation>
    <location>
        <begin position="859"/>
        <end position="868"/>
    </location>
</feature>
<feature type="helix" evidence="11">
    <location>
        <begin position="176"/>
        <end position="178"/>
    </location>
</feature>
<feature type="helix" evidence="11">
    <location>
        <begin position="183"/>
        <end position="187"/>
    </location>
</feature>
<feature type="strand" evidence="11">
    <location>
        <begin position="191"/>
        <end position="193"/>
    </location>
</feature>
<feature type="helix" evidence="11">
    <location>
        <begin position="194"/>
        <end position="198"/>
    </location>
</feature>
<feature type="helix" evidence="11">
    <location>
        <begin position="201"/>
        <end position="217"/>
    </location>
</feature>
<feature type="helix" evidence="11">
    <location>
        <begin position="226"/>
        <end position="237"/>
    </location>
</feature>
<feature type="strand" evidence="11">
    <location>
        <begin position="240"/>
        <end position="245"/>
    </location>
</feature>
<feature type="helix" evidence="11">
    <location>
        <begin position="246"/>
        <end position="250"/>
    </location>
</feature>
<feature type="strand" evidence="11">
    <location>
        <begin position="251"/>
        <end position="253"/>
    </location>
</feature>
<feature type="helix" evidence="11">
    <location>
        <begin position="254"/>
        <end position="262"/>
    </location>
</feature>
<feature type="helix" evidence="11">
    <location>
        <begin position="264"/>
        <end position="282"/>
    </location>
</feature>
<feature type="helix" evidence="11">
    <location>
        <begin position="286"/>
        <end position="288"/>
    </location>
</feature>
<feature type="strand" evidence="11">
    <location>
        <begin position="294"/>
        <end position="298"/>
    </location>
</feature>
<feature type="helix" evidence="11">
    <location>
        <begin position="306"/>
        <end position="308"/>
    </location>
</feature>
<feature type="helix" evidence="11">
    <location>
        <begin position="311"/>
        <end position="313"/>
    </location>
</feature>
<feature type="strand" evidence="11">
    <location>
        <begin position="316"/>
        <end position="327"/>
    </location>
</feature>
<feature type="strand" evidence="11">
    <location>
        <begin position="331"/>
        <end position="345"/>
    </location>
</feature>
<feature type="strand" evidence="11">
    <location>
        <begin position="347"/>
        <end position="352"/>
    </location>
</feature>
<feature type="strand" evidence="11">
    <location>
        <begin position="362"/>
        <end position="364"/>
    </location>
</feature>
<feature type="turn" evidence="11">
    <location>
        <begin position="365"/>
        <end position="368"/>
    </location>
</feature>
<feature type="strand" evidence="11">
    <location>
        <begin position="373"/>
        <end position="391"/>
    </location>
</feature>
<feature type="turn" evidence="11">
    <location>
        <begin position="394"/>
        <end position="396"/>
    </location>
</feature>
<feature type="strand" evidence="11">
    <location>
        <begin position="405"/>
        <end position="411"/>
    </location>
</feature>
<feature type="helix" evidence="11">
    <location>
        <begin position="412"/>
        <end position="414"/>
    </location>
</feature>
<feature type="strand" evidence="11">
    <location>
        <begin position="423"/>
        <end position="433"/>
    </location>
</feature>
<feature type="helix" evidence="11">
    <location>
        <begin position="436"/>
        <end position="442"/>
    </location>
</feature>
<feature type="strand" evidence="11">
    <location>
        <begin position="448"/>
        <end position="457"/>
    </location>
</feature>
<feature type="helix" evidence="11">
    <location>
        <begin position="478"/>
        <end position="488"/>
    </location>
</feature>
<feature type="turn" evidence="10">
    <location>
        <begin position="490"/>
        <end position="492"/>
    </location>
</feature>
<feature type="helix" evidence="11">
    <location>
        <begin position="493"/>
        <end position="500"/>
    </location>
</feature>
<feature type="helix" evidence="11">
    <location>
        <begin position="509"/>
        <end position="520"/>
    </location>
</feature>
<feature type="strand" evidence="11">
    <location>
        <begin position="525"/>
        <end position="527"/>
    </location>
</feature>
<feature type="strand" evidence="11">
    <location>
        <begin position="539"/>
        <end position="543"/>
    </location>
</feature>
<feature type="strand" evidence="11">
    <location>
        <begin position="545"/>
        <end position="548"/>
    </location>
</feature>
<feature type="helix" evidence="11">
    <location>
        <begin position="549"/>
        <end position="559"/>
    </location>
</feature>
<feature type="strand" evidence="11">
    <location>
        <begin position="560"/>
        <end position="565"/>
    </location>
</feature>
<feature type="helix" evidence="11">
    <location>
        <begin position="568"/>
        <end position="570"/>
    </location>
</feature>
<feature type="helix" evidence="11">
    <location>
        <begin position="573"/>
        <end position="576"/>
    </location>
</feature>
<feature type="strand" evidence="11">
    <location>
        <begin position="577"/>
        <end position="582"/>
    </location>
</feature>
<feature type="turn" evidence="11">
    <location>
        <begin position="584"/>
        <end position="586"/>
    </location>
</feature>
<feature type="strand" evidence="11">
    <location>
        <begin position="588"/>
        <end position="593"/>
    </location>
</feature>
<feature type="helix" evidence="11">
    <location>
        <begin position="595"/>
        <end position="598"/>
    </location>
</feature>
<feature type="strand" evidence="11">
    <location>
        <begin position="600"/>
        <end position="606"/>
    </location>
</feature>
<feature type="helix" evidence="11">
    <location>
        <begin position="609"/>
        <end position="611"/>
    </location>
</feature>
<feature type="helix" evidence="11">
    <location>
        <begin position="614"/>
        <end position="617"/>
    </location>
</feature>
<feature type="helix" evidence="11">
    <location>
        <begin position="618"/>
        <end position="620"/>
    </location>
</feature>
<feature type="helix" evidence="11">
    <location>
        <begin position="621"/>
        <end position="624"/>
    </location>
</feature>
<feature type="strand" evidence="11">
    <location>
        <begin position="628"/>
        <end position="633"/>
    </location>
</feature>
<feature type="strand" evidence="11">
    <location>
        <begin position="636"/>
        <end position="641"/>
    </location>
</feature>
<feature type="strand" evidence="11">
    <location>
        <begin position="644"/>
        <end position="650"/>
    </location>
</feature>
<feature type="helix" evidence="11">
    <location>
        <begin position="653"/>
        <end position="655"/>
    </location>
</feature>
<feature type="strand" evidence="10">
    <location>
        <begin position="659"/>
        <end position="661"/>
    </location>
</feature>
<feature type="helix" evidence="11">
    <location>
        <begin position="663"/>
        <end position="666"/>
    </location>
</feature>
<feature type="helix" evidence="11">
    <location>
        <begin position="671"/>
        <end position="676"/>
    </location>
</feature>
<feature type="strand" evidence="11">
    <location>
        <begin position="679"/>
        <end position="683"/>
    </location>
</feature>
<feature type="helix" evidence="11">
    <location>
        <begin position="689"/>
        <end position="705"/>
    </location>
</feature>
<feature type="helix" evidence="11">
    <location>
        <begin position="740"/>
        <end position="752"/>
    </location>
</feature>
<feature type="turn" evidence="11">
    <location>
        <begin position="753"/>
        <end position="755"/>
    </location>
</feature>
<feature type="helix" evidence="11">
    <location>
        <begin position="760"/>
        <end position="773"/>
    </location>
</feature>
<feature type="helix" evidence="11">
    <location>
        <begin position="783"/>
        <end position="796"/>
    </location>
</feature>
<feature type="helix" evidence="11">
    <location>
        <begin position="807"/>
        <end position="823"/>
    </location>
</feature>
<feature type="strand" evidence="10">
    <location>
        <begin position="827"/>
        <end position="829"/>
    </location>
</feature>
<feature type="helix" evidence="11">
    <location>
        <begin position="831"/>
        <end position="847"/>
    </location>
</feature>
<feature type="helix" evidence="11">
    <location>
        <begin position="851"/>
        <end position="865"/>
    </location>
</feature>
<protein>
    <recommendedName>
        <fullName>DNA replication licensing factor MCM2</fullName>
        <ecNumber>3.6.4.12</ecNumber>
    </recommendedName>
    <alternativeName>
        <fullName>Minichromosome maintenance protein 2</fullName>
    </alternativeName>
</protein>
<keyword id="KW-0002">3D-structure</keyword>
<keyword id="KW-0067">ATP-binding</keyword>
<keyword id="KW-0131">Cell cycle</keyword>
<keyword id="KW-0235">DNA replication</keyword>
<keyword id="KW-0238">DNA-binding</keyword>
<keyword id="KW-0347">Helicase</keyword>
<keyword id="KW-0378">Hydrolase</keyword>
<keyword id="KW-0479">Metal-binding</keyword>
<keyword id="KW-0547">Nucleotide-binding</keyword>
<keyword id="KW-0539">Nucleus</keyword>
<keyword id="KW-0597">Phosphoprotein</keyword>
<keyword id="KW-1185">Reference proteome</keyword>
<keyword id="KW-0862">Zinc</keyword>
<keyword id="KW-0863">Zinc-finger</keyword>
<proteinExistence type="evidence at protein level"/>
<evidence type="ECO:0000255" key="1"/>
<evidence type="ECO:0000256" key="2">
    <source>
        <dbReference type="SAM" id="MobiDB-lite"/>
    </source>
</evidence>
<evidence type="ECO:0000269" key="3">
    <source>
    </source>
</evidence>
<evidence type="ECO:0000269" key="4">
    <source>
    </source>
</evidence>
<evidence type="ECO:0000269" key="5">
    <source>
    </source>
</evidence>
<evidence type="ECO:0000269" key="6">
    <source>
    </source>
</evidence>
<evidence type="ECO:0000269" key="7">
    <source>
    </source>
</evidence>
<evidence type="ECO:0000305" key="8"/>
<evidence type="ECO:0007744" key="9">
    <source>
    </source>
</evidence>
<evidence type="ECO:0007829" key="10">
    <source>
        <dbReference type="PDB" id="6SKO"/>
    </source>
</evidence>
<evidence type="ECO:0007829" key="11">
    <source>
        <dbReference type="PDB" id="7PMK"/>
    </source>
</evidence>
<gene>
    <name type="primary">MCM2</name>
    <name type="ordered locus">YBL023C</name>
    <name type="ORF">YBL0438</name>
</gene>
<accession>P29469</accession>
<accession>D6VPX7</accession>
<reference key="1">
    <citation type="journal article" date="1991" name="Genes Dev.">
        <title>Mcm2 and Mcm3, two proteins important for ARS activity, are related in structure and function.</title>
        <authorList>
            <person name="Yan H."/>
            <person name="Gibson S."/>
            <person name="Tye B.K."/>
        </authorList>
    </citation>
    <scope>NUCLEOTIDE SEQUENCE [GENOMIC DNA]</scope>
    <scope>MUTAGENESIS OF CYS-364 AND CYS-367</scope>
</reference>
<reference key="2">
    <citation type="journal article" date="1994" name="Yeast">
        <title>Analysis of a 17.4 kb DNA segment of yeast chromosome II encompassing the ribosomal protein L19 as well as proteins with homologies to components of the hnRNP and snRNP complexes and to the human proliferation-associated p120 antigen.</title>
        <authorList>
            <person name="van Dyck L."/>
            <person name="Jonniaux J.-L."/>
            <person name="Barreiros T.D.M."/>
            <person name="Kleine K."/>
            <person name="Goffeau A."/>
        </authorList>
    </citation>
    <scope>NUCLEOTIDE SEQUENCE [GENOMIC DNA]</scope>
    <source>
        <strain>ATCC 204508 / S288c</strain>
    </source>
</reference>
<reference key="3">
    <citation type="journal article" date="1994" name="EMBO J.">
        <title>Complete DNA sequence of yeast chromosome II.</title>
        <authorList>
            <person name="Feldmann H."/>
            <person name="Aigle M."/>
            <person name="Aljinovic G."/>
            <person name="Andre B."/>
            <person name="Baclet M.C."/>
            <person name="Barthe C."/>
            <person name="Baur A."/>
            <person name="Becam A.-M."/>
            <person name="Biteau N."/>
            <person name="Boles E."/>
            <person name="Brandt T."/>
            <person name="Brendel M."/>
            <person name="Brueckner M."/>
            <person name="Bussereau F."/>
            <person name="Christiansen C."/>
            <person name="Contreras R."/>
            <person name="Crouzet M."/>
            <person name="Cziepluch C."/>
            <person name="Demolis N."/>
            <person name="Delaveau T."/>
            <person name="Doignon F."/>
            <person name="Domdey H."/>
            <person name="Duesterhus S."/>
            <person name="Dubois E."/>
            <person name="Dujon B."/>
            <person name="El Bakkoury M."/>
            <person name="Entian K.-D."/>
            <person name="Feuermann M."/>
            <person name="Fiers W."/>
            <person name="Fobo G.M."/>
            <person name="Fritz C."/>
            <person name="Gassenhuber J."/>
            <person name="Glansdorff N."/>
            <person name="Goffeau A."/>
            <person name="Grivell L.A."/>
            <person name="de Haan M."/>
            <person name="Hein C."/>
            <person name="Herbert C.J."/>
            <person name="Hollenberg C.P."/>
            <person name="Holmstroem K."/>
            <person name="Jacq C."/>
            <person name="Jacquet M."/>
            <person name="Jauniaux J.-C."/>
            <person name="Jonniaux J.-L."/>
            <person name="Kallesoee T."/>
            <person name="Kiesau P."/>
            <person name="Kirchrath L."/>
            <person name="Koetter P."/>
            <person name="Korol S."/>
            <person name="Liebl S."/>
            <person name="Logghe M."/>
            <person name="Lohan A.J.E."/>
            <person name="Louis E.J."/>
            <person name="Li Z.Y."/>
            <person name="Maat M.J."/>
            <person name="Mallet L."/>
            <person name="Mannhaupt G."/>
            <person name="Messenguy F."/>
            <person name="Miosga T."/>
            <person name="Molemans F."/>
            <person name="Mueller S."/>
            <person name="Nasr F."/>
            <person name="Obermaier B."/>
            <person name="Perea J."/>
            <person name="Pierard A."/>
            <person name="Piravandi E."/>
            <person name="Pohl F.M."/>
            <person name="Pohl T.M."/>
            <person name="Potier S."/>
            <person name="Proft M."/>
            <person name="Purnelle B."/>
            <person name="Ramezani Rad M."/>
            <person name="Rieger M."/>
            <person name="Rose M."/>
            <person name="Schaaff-Gerstenschlaeger I."/>
            <person name="Scherens B."/>
            <person name="Schwarzlose C."/>
            <person name="Skala J."/>
            <person name="Slonimski P.P."/>
            <person name="Smits P.H.M."/>
            <person name="Souciet J.-L."/>
            <person name="Steensma H.Y."/>
            <person name="Stucka R."/>
            <person name="Urrestarazu L.A."/>
            <person name="van der Aart Q.J.M."/>
            <person name="Van Dyck L."/>
            <person name="Vassarotti A."/>
            <person name="Vetter I."/>
            <person name="Vierendeels F."/>
            <person name="Vissers S."/>
            <person name="Wagner G."/>
            <person name="de Wergifosse P."/>
            <person name="Wolfe K.H."/>
            <person name="Zagulski M."/>
            <person name="Zimmermann F.K."/>
            <person name="Mewes H.-W."/>
            <person name="Kleine K."/>
        </authorList>
    </citation>
    <scope>NUCLEOTIDE SEQUENCE [LARGE SCALE GENOMIC DNA]</scope>
    <source>
        <strain>ATCC 204508 / S288c</strain>
    </source>
</reference>
<reference key="4">
    <citation type="journal article" date="2008" name="Mol. Cell">
        <title>The Mcm2-7 complex has in vitro helicase activity.</title>
        <authorList>
            <person name="Bochman M.L."/>
            <person name="Schwacha A."/>
        </authorList>
    </citation>
    <scope>RECONSTITUTION OF THE MCM2-7 COMPLEX</scope>
    <scope>HELICASE ACTIVITY OF THE MCM2-7 COMPLEX</scope>
    <scope>MUTAGENESIS OF LYS-549 AND ARG-676</scope>
</reference>
<reference key="5">
    <citation type="journal article" date="2009" name="Cell">
        <title>Concerted loading of Mcm2-7 double hexamers around DNA during DNA replication origin licensing.</title>
        <authorList>
            <person name="Remus D."/>
            <person name="Beuron F."/>
            <person name="Tolun G."/>
            <person name="Griffith J.D."/>
            <person name="Morris E.P."/>
            <person name="Diffley J.F."/>
        </authorList>
    </citation>
    <scope>IDENTIFICATION IN THE MCM2-7 COMPLEX</scope>
    <scope>FUNCTION OF THE MCM2-7 COMPLEX</scope>
    <scope>ELECTRON MICROSCOPY OF THE MCM2-7 COMPLEX</scope>
</reference>
<reference key="6">
    <citation type="journal article" date="2009" name="Proc. Natl. Acad. Sci. U.S.A.">
        <title>A double-hexameric MCM2-7 complex is loaded onto origin DNA during licensing of eukaryotic DNA replication.</title>
        <authorList>
            <person name="Evrin C."/>
            <person name="Clarke P."/>
            <person name="Zech J."/>
            <person name="Lurz R."/>
            <person name="Sun J."/>
            <person name="Uhle S."/>
            <person name="Li H."/>
            <person name="Stillman B."/>
            <person name="Speck C."/>
        </authorList>
    </citation>
    <scope>IDENTIFICATION IN THE MCM2-7 COMPLEX</scope>
    <scope>FUNCTION OF THE MCM2-7 COMPLEX</scope>
    <scope>ELECTRON MICROSCOPY OF THE MCM2-7 COMPLEX</scope>
</reference>
<reference key="7">
    <citation type="journal article" date="2014" name="G3 (Bethesda)">
        <title>The reference genome sequence of Saccharomyces cerevisiae: Then and now.</title>
        <authorList>
            <person name="Engel S.R."/>
            <person name="Dietrich F.S."/>
            <person name="Fisk D.G."/>
            <person name="Binkley G."/>
            <person name="Balakrishnan R."/>
            <person name="Costanzo M.C."/>
            <person name="Dwight S.S."/>
            <person name="Hitz B.C."/>
            <person name="Karra K."/>
            <person name="Nash R.S."/>
            <person name="Weng S."/>
            <person name="Wong E.D."/>
            <person name="Lloyd P."/>
            <person name="Skrzypek M.S."/>
            <person name="Miyasato S.R."/>
            <person name="Simison M."/>
            <person name="Cherry J.M."/>
        </authorList>
    </citation>
    <scope>GENOME REANNOTATION</scope>
    <source>
        <strain>ATCC 204508 / S288c</strain>
    </source>
</reference>
<reference key="8">
    <citation type="journal article" date="1994" name="J. Biol. Chem.">
        <title>PIM1 encodes a mitochondrial ATP-dependent protease that is required for mitochondrial function in the yeast Saccharomyces cerevisiae.</title>
        <authorList>
            <person name="van Dyck L."/>
            <person name="Pearce D.A."/>
            <person name="Sherman F."/>
        </authorList>
    </citation>
    <scope>NUCLEOTIDE SEQUENCE [GENOMIC DNA] OF 1-85</scope>
    <source>
        <strain>ATCC 204508 / S288c</strain>
    </source>
</reference>
<reference key="9">
    <citation type="journal article" date="2003" name="Nature">
        <title>Global analysis of protein expression in yeast.</title>
        <authorList>
            <person name="Ghaemmaghami S."/>
            <person name="Huh W.-K."/>
            <person name="Bower K."/>
            <person name="Howson R.W."/>
            <person name="Belle A."/>
            <person name="Dephoure N."/>
            <person name="O'Shea E.K."/>
            <person name="Weissman J.S."/>
        </authorList>
    </citation>
    <scope>LEVEL OF PROTEIN EXPRESSION [LARGE SCALE ANALYSIS]</scope>
</reference>
<reference key="10">
    <citation type="journal article" date="2009" name="Science">
        <title>Global analysis of Cdk1 substrate phosphorylation sites provides insights into evolution.</title>
        <authorList>
            <person name="Holt L.J."/>
            <person name="Tuch B.B."/>
            <person name="Villen J."/>
            <person name="Johnson A.D."/>
            <person name="Gygi S.P."/>
            <person name="Morgan D.O."/>
        </authorList>
    </citation>
    <scope>PHOSPHORYLATION [LARGE SCALE ANALYSIS] AT SER-14; SER-16; SER-23; SER-164 AND SER-170</scope>
    <scope>IDENTIFICATION BY MASS SPECTROMETRY [LARGE SCALE ANALYSIS]</scope>
</reference>
<comment type="function">
    <text evidence="5 6">Acts as a component of the MCM2-7 complex (MCM complex) which is the putative replicative helicase essential for 'once per cell cycle' DNA replication initiation and elongation in eukaryotic cells. The active ATPase sites in the MCM2-7 ring are formed through the interaction surfaces of two neighboring subunits such that a critical structure of a conserved arginine finger motif is provided in trans relative to the ATP-binding site of the Walker A box of the adjacent subunit. The six ATPase active sites, however, are likely to contribute differentially to the complex helicase activity; specifically the MCM2-MCM5 association is proposed to be reversible and to mediate a open ring conformation which may facilitate DNA loading. Once loaded onto DNA, double hexamers can slide on dsDNA in the absence of ATPase activity. Necessary for cell growth.</text>
</comment>
<comment type="catalytic activity">
    <reaction>
        <text>ATP + H2O = ADP + phosphate + H(+)</text>
        <dbReference type="Rhea" id="RHEA:13065"/>
        <dbReference type="ChEBI" id="CHEBI:15377"/>
        <dbReference type="ChEBI" id="CHEBI:15378"/>
        <dbReference type="ChEBI" id="CHEBI:30616"/>
        <dbReference type="ChEBI" id="CHEBI:43474"/>
        <dbReference type="ChEBI" id="CHEBI:456216"/>
        <dbReference type="EC" id="3.6.4.12"/>
    </reaction>
</comment>
<comment type="subunit">
    <text evidence="5 6">Component of the MCM2-7 complex. The complex forms a toroidal hexameric ring with the proposed subunit order MCM2-MCM6-MCM4-MCM7-MCM3-MCM5; loaded onto DNA, forms a head-head double hexamer.</text>
</comment>
<comment type="interaction">
    <interactant intactId="EBI-10533">
        <id>P29469</id>
    </interactant>
    <interactant intactId="EBI-4447">
        <id>P09119</id>
        <label>CDC6</label>
    </interactant>
    <organismsDiffer>false</organismsDiffer>
    <experiments>4</experiments>
</comment>
<comment type="interaction">
    <interactant intactId="EBI-10533">
        <id>P29469</id>
    </interactant>
    <interactant intactId="EBI-31943">
        <id>Q08496</id>
        <label>DIA2</label>
    </interactant>
    <organismsDiffer>false</organismsDiffer>
    <experiments>4</experiments>
</comment>
<comment type="interaction">
    <interactant intactId="EBI-10533">
        <id>P29469</id>
    </interactant>
    <interactant intactId="EBI-5965">
        <id>P32354</id>
        <label>MCM10</label>
    </interactant>
    <organismsDiffer>false</organismsDiffer>
    <experiments>3</experiments>
</comment>
<comment type="interaction">
    <interactant intactId="EBI-10533">
        <id>P29469</id>
    </interactant>
    <interactant intactId="EBI-4326">
        <id>P30665</id>
        <label>MCM4</label>
    </interactant>
    <organismsDiffer>false</organismsDiffer>
    <experiments>16</experiments>
</comment>
<comment type="interaction">
    <interactant intactId="EBI-10533">
        <id>P29469</id>
    </interactant>
    <interactant intactId="EBI-17490">
        <id>Q12306</id>
        <label>SMT3</label>
    </interactant>
    <organismsDiffer>false</organismsDiffer>
    <experiments>2</experiments>
</comment>
<comment type="subcellular location">
    <subcellularLocation>
        <location>Nucleus</location>
    </subcellularLocation>
</comment>
<comment type="miscellaneous">
    <text evidence="3">Present with 1690 molecules/cell in log phase SD medium.</text>
</comment>
<comment type="miscellaneous">
    <text>Early fractionation of eukaryotic MCM proteins yielded a variety of dimeric, trimeric and tetrameric complexes with unclear biological significance. Specifically a MCM467 subcomplex is shown to have in vitro helicase activity which is inhibited by the MCM2 subunit. The MCM2-7 hexamer is the proposed physiological active complex.</text>
</comment>
<comment type="similarity">
    <text evidence="8">Belongs to the MCM family.</text>
</comment>
<sequence>MSDNRRRRREEDDSDSENELPPSSPQQHFRGGMNPVSSPIGSPDMINPEGDDNEVDDVPDIDEVEEQMNEVDLMDDNMYEDYAADHNRDRYDPDQVDDREQQELSLSERRRIDAQLNERDRLLRNVAYIDDEDEEQEGAAQLDEMGLPVQRRRRRRQYEDLENSDDDLLSDMDIDPLREELTLESLSNVKANSYSEWITQPNVSRTIARELKSFLLEYTDETGRSVYGARIRTLGEMNSESLEVNYRHLAESKAILALFLAKCPEEMLKIFDLVAMEATELHYPDYARIHSEIHVRISDFPTIYSLRELRESNLSSLVRVTGVVTRRTGVFPQLKYVKFNCLKCGSILGPFFQDSNEEIRISFCTNCKSKGPFRVNGEKTVYRNYQRVTLQEAPGTVPPGRLPRHREVILLADLVDVSKPGEEVEVTGIYKNNYDGNLNAKNGFPVFATIIEANSIKRREGNTANEGEEGLDVFSWTEEEEREFRKISRDRGIIDKIISSMAPSIYGHRDIKTAVACSLFGGVPKNVNGKHSIRGDINVLLLGDPGTAKSQILKYVEKTAHRAVFATGQGASAVGLTASVRKDPITKEWTLEGGALVLADKGVCLIDEFDKMNDQDRTSIHEAMEQQSISISKAGIVTTLQARCSIIAAANPNGGRYNSTLPLAQNVSLTEPILSRFDILCVVRDLVDEEADERLATFVVDSHVRSHPENDEDREGEELKNNGESAIEQGEDEINEQLNARQRRLQRQRKKEEEISPIPQELLMKYIHYARTKIYPKLHQMDMDKVSRVYADLRRESISTGSFPITVRHLESILRIAESFAKMRLSEFVSSYDLDRAIKVVVDSFVDAQKVSVRRQLRRSFAIYTLGH</sequence>
<organism>
    <name type="scientific">Saccharomyces cerevisiae (strain ATCC 204508 / S288c)</name>
    <name type="common">Baker's yeast</name>
    <dbReference type="NCBI Taxonomy" id="559292"/>
    <lineage>
        <taxon>Eukaryota</taxon>
        <taxon>Fungi</taxon>
        <taxon>Dikarya</taxon>
        <taxon>Ascomycota</taxon>
        <taxon>Saccharomycotina</taxon>
        <taxon>Saccharomycetes</taxon>
        <taxon>Saccharomycetales</taxon>
        <taxon>Saccharomycetaceae</taxon>
        <taxon>Saccharomyces</taxon>
    </lineage>
</organism>